<sequence length="215" mass="23270">MITIALPKGALLEDSISIFKKAGLNFSDALLENSRSLTVESKCKRAKALLVRNGDVPVYVSYGQADLGIVGYDVLQESELKVAKLLDLEFGGCHMSLAVKNNSNYLKPTDLPANCKVASKFTKTARAYFDDLNIPVEIVHLTGSVELGPITGMAEAIVDLVATGKTLKENGLSKIDDLFYSTARLIANPLSLRLDSNPLRDVILSIESSKDILNI</sequence>
<evidence type="ECO:0000255" key="1">
    <source>
        <dbReference type="HAMAP-Rule" id="MF_01018"/>
    </source>
</evidence>
<protein>
    <recommendedName>
        <fullName evidence="1">ATP phosphoribosyltransferase</fullName>
        <shortName evidence="1">ATP-PRT</shortName>
        <shortName evidence="1">ATP-PRTase</shortName>
        <ecNumber evidence="1">2.4.2.17</ecNumber>
    </recommendedName>
</protein>
<gene>
    <name evidence="1" type="primary">hisG</name>
    <name type="ordered locus">PMM0560</name>
</gene>
<organism>
    <name type="scientific">Prochlorococcus marinus subsp. pastoris (strain CCMP1986 / NIES-2087 / MED4)</name>
    <dbReference type="NCBI Taxonomy" id="59919"/>
    <lineage>
        <taxon>Bacteria</taxon>
        <taxon>Bacillati</taxon>
        <taxon>Cyanobacteriota</taxon>
        <taxon>Cyanophyceae</taxon>
        <taxon>Synechococcales</taxon>
        <taxon>Prochlorococcaceae</taxon>
        <taxon>Prochlorococcus</taxon>
    </lineage>
</organism>
<name>HIS1_PROMP</name>
<proteinExistence type="inferred from homology"/>
<dbReference type="EC" id="2.4.2.17" evidence="1"/>
<dbReference type="EMBL" id="BX548174">
    <property type="protein sequence ID" value="CAE19019.1"/>
    <property type="molecule type" value="Genomic_DNA"/>
</dbReference>
<dbReference type="RefSeq" id="WP_011132194.1">
    <property type="nucleotide sequence ID" value="NC_005072.1"/>
</dbReference>
<dbReference type="SMR" id="Q7V2C0"/>
<dbReference type="STRING" id="59919.PMM0560"/>
<dbReference type="KEGG" id="pmm:PMM0560"/>
<dbReference type="eggNOG" id="COG0040">
    <property type="taxonomic scope" value="Bacteria"/>
</dbReference>
<dbReference type="HOGENOM" id="CLU_038115_2_0_3"/>
<dbReference type="OrthoDB" id="9801867at2"/>
<dbReference type="UniPathway" id="UPA00031">
    <property type="reaction ID" value="UER00006"/>
</dbReference>
<dbReference type="Proteomes" id="UP000001026">
    <property type="component" value="Chromosome"/>
</dbReference>
<dbReference type="GO" id="GO:0005737">
    <property type="term" value="C:cytoplasm"/>
    <property type="evidence" value="ECO:0007669"/>
    <property type="project" value="UniProtKB-SubCell"/>
</dbReference>
<dbReference type="GO" id="GO:0005524">
    <property type="term" value="F:ATP binding"/>
    <property type="evidence" value="ECO:0007669"/>
    <property type="project" value="UniProtKB-KW"/>
</dbReference>
<dbReference type="GO" id="GO:0003879">
    <property type="term" value="F:ATP phosphoribosyltransferase activity"/>
    <property type="evidence" value="ECO:0007669"/>
    <property type="project" value="UniProtKB-UniRule"/>
</dbReference>
<dbReference type="GO" id="GO:0000105">
    <property type="term" value="P:L-histidine biosynthetic process"/>
    <property type="evidence" value="ECO:0007669"/>
    <property type="project" value="UniProtKB-UniRule"/>
</dbReference>
<dbReference type="CDD" id="cd13595">
    <property type="entry name" value="PBP2_HisGs"/>
    <property type="match status" value="1"/>
</dbReference>
<dbReference type="FunFam" id="3.40.190.10:FF:000008">
    <property type="entry name" value="ATP phosphoribosyltransferase"/>
    <property type="match status" value="1"/>
</dbReference>
<dbReference type="Gene3D" id="3.40.190.10">
    <property type="entry name" value="Periplasmic binding protein-like II"/>
    <property type="match status" value="2"/>
</dbReference>
<dbReference type="HAMAP" id="MF_01018">
    <property type="entry name" value="HisG_Short"/>
    <property type="match status" value="1"/>
</dbReference>
<dbReference type="InterPro" id="IPR013820">
    <property type="entry name" value="ATP_PRibTrfase_cat"/>
</dbReference>
<dbReference type="InterPro" id="IPR018198">
    <property type="entry name" value="ATP_PRibTrfase_CS"/>
</dbReference>
<dbReference type="InterPro" id="IPR001348">
    <property type="entry name" value="ATP_PRibTrfase_HisG"/>
</dbReference>
<dbReference type="InterPro" id="IPR024893">
    <property type="entry name" value="ATP_PRibTrfase_HisG_short"/>
</dbReference>
<dbReference type="NCBIfam" id="TIGR00070">
    <property type="entry name" value="hisG"/>
    <property type="match status" value="1"/>
</dbReference>
<dbReference type="PANTHER" id="PTHR21403:SF8">
    <property type="entry name" value="ATP PHOSPHORIBOSYLTRANSFERASE"/>
    <property type="match status" value="1"/>
</dbReference>
<dbReference type="PANTHER" id="PTHR21403">
    <property type="entry name" value="ATP PHOSPHORIBOSYLTRANSFERASE ATP-PRTASE"/>
    <property type="match status" value="1"/>
</dbReference>
<dbReference type="Pfam" id="PF01634">
    <property type="entry name" value="HisG"/>
    <property type="match status" value="1"/>
</dbReference>
<dbReference type="SUPFAM" id="SSF53850">
    <property type="entry name" value="Periplasmic binding protein-like II"/>
    <property type="match status" value="1"/>
</dbReference>
<dbReference type="PROSITE" id="PS01316">
    <property type="entry name" value="ATP_P_PHORIBOSYLTR"/>
    <property type="match status" value="1"/>
</dbReference>
<keyword id="KW-0028">Amino-acid biosynthesis</keyword>
<keyword id="KW-0067">ATP-binding</keyword>
<keyword id="KW-0963">Cytoplasm</keyword>
<keyword id="KW-0328">Glycosyltransferase</keyword>
<keyword id="KW-0368">Histidine biosynthesis</keyword>
<keyword id="KW-0547">Nucleotide-binding</keyword>
<keyword id="KW-0808">Transferase</keyword>
<comment type="function">
    <text evidence="1">Catalyzes the condensation of ATP and 5-phosphoribose 1-diphosphate to form N'-(5'-phosphoribosyl)-ATP (PR-ATP). Has a crucial role in the pathway because the rate of histidine biosynthesis seems to be controlled primarily by regulation of HisG enzymatic activity.</text>
</comment>
<comment type="catalytic activity">
    <reaction evidence="1">
        <text>1-(5-phospho-beta-D-ribosyl)-ATP + diphosphate = 5-phospho-alpha-D-ribose 1-diphosphate + ATP</text>
        <dbReference type="Rhea" id="RHEA:18473"/>
        <dbReference type="ChEBI" id="CHEBI:30616"/>
        <dbReference type="ChEBI" id="CHEBI:33019"/>
        <dbReference type="ChEBI" id="CHEBI:58017"/>
        <dbReference type="ChEBI" id="CHEBI:73183"/>
        <dbReference type="EC" id="2.4.2.17"/>
    </reaction>
</comment>
<comment type="pathway">
    <text evidence="1">Amino-acid biosynthesis; L-histidine biosynthesis; L-histidine from 5-phospho-alpha-D-ribose 1-diphosphate: step 1/9.</text>
</comment>
<comment type="subunit">
    <text evidence="1">Heteromultimer composed of HisG and HisZ subunits.</text>
</comment>
<comment type="subcellular location">
    <subcellularLocation>
        <location evidence="1">Cytoplasm</location>
    </subcellularLocation>
</comment>
<comment type="domain">
    <text>Lacks the C-terminal regulatory region which is replaced by HisZ.</text>
</comment>
<comment type="similarity">
    <text evidence="1">Belongs to the ATP phosphoribosyltransferase family. Short subfamily.</text>
</comment>
<accession>Q7V2C0</accession>
<feature type="chain" id="PRO_0000151924" description="ATP phosphoribosyltransferase">
    <location>
        <begin position="1"/>
        <end position="215"/>
    </location>
</feature>
<reference key="1">
    <citation type="journal article" date="2003" name="Nature">
        <title>Genome divergence in two Prochlorococcus ecotypes reflects oceanic niche differentiation.</title>
        <authorList>
            <person name="Rocap G."/>
            <person name="Larimer F.W."/>
            <person name="Lamerdin J.E."/>
            <person name="Malfatti S."/>
            <person name="Chain P."/>
            <person name="Ahlgren N.A."/>
            <person name="Arellano A."/>
            <person name="Coleman M."/>
            <person name="Hauser L."/>
            <person name="Hess W.R."/>
            <person name="Johnson Z.I."/>
            <person name="Land M.L."/>
            <person name="Lindell D."/>
            <person name="Post A.F."/>
            <person name="Regala W."/>
            <person name="Shah M."/>
            <person name="Shaw S.L."/>
            <person name="Steglich C."/>
            <person name="Sullivan M.B."/>
            <person name="Ting C.S."/>
            <person name="Tolonen A."/>
            <person name="Webb E.A."/>
            <person name="Zinser E.R."/>
            <person name="Chisholm S.W."/>
        </authorList>
    </citation>
    <scope>NUCLEOTIDE SEQUENCE [LARGE SCALE GENOMIC DNA]</scope>
    <source>
        <strain>CCMP1986 / NIES-2087 / MED4</strain>
    </source>
</reference>